<reference key="1">
    <citation type="submission" date="2005-10" db="EMBL/GenBank/DDBJ databases">
        <title>Complete sequence of Pelobacter carbinolicus DSM 2380.</title>
        <authorList>
            <person name="Copeland A."/>
            <person name="Lucas S."/>
            <person name="Lapidus A."/>
            <person name="Barry K."/>
            <person name="Detter J.C."/>
            <person name="Glavina T."/>
            <person name="Hammon N."/>
            <person name="Israni S."/>
            <person name="Pitluck S."/>
            <person name="Chertkov O."/>
            <person name="Schmutz J."/>
            <person name="Larimer F."/>
            <person name="Land M."/>
            <person name="Kyrpides N."/>
            <person name="Ivanova N."/>
            <person name="Richardson P."/>
        </authorList>
    </citation>
    <scope>NUCLEOTIDE SEQUENCE [LARGE SCALE GENOMIC DNA]</scope>
    <source>
        <strain>DSM 2380 / NBRC 103641 / GraBd1</strain>
    </source>
</reference>
<gene>
    <name evidence="1" type="primary">deoB</name>
    <name type="ordered locus">Pcar_2320</name>
</gene>
<comment type="function">
    <text evidence="1">Isomerase that catalyzes the conversion of deoxy-ribose 1-phosphate (dRib-1-P) and ribose 1-phosphate (Rib-1-P) to deoxy-ribose 5-phosphate (dRib-5-P) and ribose 5-phosphate (Rib-5-P), respectively.</text>
</comment>
<comment type="catalytic activity">
    <reaction evidence="1">
        <text>2-deoxy-alpha-D-ribose 1-phosphate = 2-deoxy-D-ribose 5-phosphate</text>
        <dbReference type="Rhea" id="RHEA:27658"/>
        <dbReference type="ChEBI" id="CHEBI:57259"/>
        <dbReference type="ChEBI" id="CHEBI:62877"/>
        <dbReference type="EC" id="5.4.2.7"/>
    </reaction>
</comment>
<comment type="catalytic activity">
    <reaction evidence="1">
        <text>alpha-D-ribose 1-phosphate = D-ribose 5-phosphate</text>
        <dbReference type="Rhea" id="RHEA:18793"/>
        <dbReference type="ChEBI" id="CHEBI:57720"/>
        <dbReference type="ChEBI" id="CHEBI:78346"/>
        <dbReference type="EC" id="5.4.2.7"/>
    </reaction>
</comment>
<comment type="cofactor">
    <cofactor evidence="1">
        <name>Mn(2+)</name>
        <dbReference type="ChEBI" id="CHEBI:29035"/>
    </cofactor>
    <text evidence="1">Binds 2 manganese ions.</text>
</comment>
<comment type="pathway">
    <text evidence="1">Carbohydrate degradation; 2-deoxy-D-ribose 1-phosphate degradation; D-glyceraldehyde 3-phosphate and acetaldehyde from 2-deoxy-alpha-D-ribose 1-phosphate: step 1/2.</text>
</comment>
<comment type="subcellular location">
    <subcellularLocation>
        <location evidence="1">Cytoplasm</location>
    </subcellularLocation>
</comment>
<comment type="similarity">
    <text evidence="1">Belongs to the phosphopentomutase family.</text>
</comment>
<organism>
    <name type="scientific">Syntrophotalea carbinolica (strain DSM 2380 / NBRC 103641 / GraBd1)</name>
    <name type="common">Pelobacter carbinolicus</name>
    <dbReference type="NCBI Taxonomy" id="338963"/>
    <lineage>
        <taxon>Bacteria</taxon>
        <taxon>Pseudomonadati</taxon>
        <taxon>Thermodesulfobacteriota</taxon>
        <taxon>Desulfuromonadia</taxon>
        <taxon>Desulfuromonadales</taxon>
        <taxon>Syntrophotaleaceae</taxon>
        <taxon>Syntrophotalea</taxon>
    </lineage>
</organism>
<accession>Q3A248</accession>
<dbReference type="EC" id="5.4.2.7" evidence="1"/>
<dbReference type="EMBL" id="CP000142">
    <property type="protein sequence ID" value="ABA89559.1"/>
    <property type="molecule type" value="Genomic_DNA"/>
</dbReference>
<dbReference type="RefSeq" id="WP_011342081.1">
    <property type="nucleotide sequence ID" value="NC_007498.2"/>
</dbReference>
<dbReference type="SMR" id="Q3A248"/>
<dbReference type="STRING" id="338963.Pcar_2320"/>
<dbReference type="KEGG" id="pca:Pcar_2320"/>
<dbReference type="eggNOG" id="COG1015">
    <property type="taxonomic scope" value="Bacteria"/>
</dbReference>
<dbReference type="HOGENOM" id="CLU_053861_0_0_7"/>
<dbReference type="OrthoDB" id="9769930at2"/>
<dbReference type="UniPathway" id="UPA00002">
    <property type="reaction ID" value="UER00467"/>
</dbReference>
<dbReference type="Proteomes" id="UP000002534">
    <property type="component" value="Chromosome"/>
</dbReference>
<dbReference type="GO" id="GO:0005829">
    <property type="term" value="C:cytosol"/>
    <property type="evidence" value="ECO:0007669"/>
    <property type="project" value="TreeGrafter"/>
</dbReference>
<dbReference type="GO" id="GO:0000287">
    <property type="term" value="F:magnesium ion binding"/>
    <property type="evidence" value="ECO:0007669"/>
    <property type="project" value="InterPro"/>
</dbReference>
<dbReference type="GO" id="GO:0030145">
    <property type="term" value="F:manganese ion binding"/>
    <property type="evidence" value="ECO:0007669"/>
    <property type="project" value="UniProtKB-UniRule"/>
</dbReference>
<dbReference type="GO" id="GO:0008973">
    <property type="term" value="F:phosphopentomutase activity"/>
    <property type="evidence" value="ECO:0007669"/>
    <property type="project" value="UniProtKB-UniRule"/>
</dbReference>
<dbReference type="GO" id="GO:0006018">
    <property type="term" value="P:2-deoxyribose 1-phosphate catabolic process"/>
    <property type="evidence" value="ECO:0007669"/>
    <property type="project" value="UniProtKB-UniRule"/>
</dbReference>
<dbReference type="GO" id="GO:0006015">
    <property type="term" value="P:5-phosphoribose 1-diphosphate biosynthetic process"/>
    <property type="evidence" value="ECO:0007669"/>
    <property type="project" value="UniProtKB-UniPathway"/>
</dbReference>
<dbReference type="GO" id="GO:0043094">
    <property type="term" value="P:metabolic compound salvage"/>
    <property type="evidence" value="ECO:0007669"/>
    <property type="project" value="InterPro"/>
</dbReference>
<dbReference type="GO" id="GO:0009117">
    <property type="term" value="P:nucleotide metabolic process"/>
    <property type="evidence" value="ECO:0007669"/>
    <property type="project" value="InterPro"/>
</dbReference>
<dbReference type="CDD" id="cd16009">
    <property type="entry name" value="PPM"/>
    <property type="match status" value="1"/>
</dbReference>
<dbReference type="Gene3D" id="3.40.720.10">
    <property type="entry name" value="Alkaline Phosphatase, subunit A"/>
    <property type="match status" value="1"/>
</dbReference>
<dbReference type="Gene3D" id="3.30.70.1250">
    <property type="entry name" value="Phosphopentomutase"/>
    <property type="match status" value="1"/>
</dbReference>
<dbReference type="HAMAP" id="MF_00740">
    <property type="entry name" value="Phosphopentomut"/>
    <property type="match status" value="1"/>
</dbReference>
<dbReference type="InterPro" id="IPR017850">
    <property type="entry name" value="Alkaline_phosphatase_core_sf"/>
</dbReference>
<dbReference type="InterPro" id="IPR010045">
    <property type="entry name" value="DeoB"/>
</dbReference>
<dbReference type="InterPro" id="IPR006124">
    <property type="entry name" value="Metalloenzyme"/>
</dbReference>
<dbReference type="InterPro" id="IPR024052">
    <property type="entry name" value="Phosphopentomutase_DeoB_cap_sf"/>
</dbReference>
<dbReference type="NCBIfam" id="TIGR01696">
    <property type="entry name" value="deoB"/>
    <property type="match status" value="1"/>
</dbReference>
<dbReference type="NCBIfam" id="NF003766">
    <property type="entry name" value="PRK05362.1"/>
    <property type="match status" value="1"/>
</dbReference>
<dbReference type="PANTHER" id="PTHR21110">
    <property type="entry name" value="PHOSPHOPENTOMUTASE"/>
    <property type="match status" value="1"/>
</dbReference>
<dbReference type="PANTHER" id="PTHR21110:SF0">
    <property type="entry name" value="PHOSPHOPENTOMUTASE"/>
    <property type="match status" value="1"/>
</dbReference>
<dbReference type="Pfam" id="PF01676">
    <property type="entry name" value="Metalloenzyme"/>
    <property type="match status" value="1"/>
</dbReference>
<dbReference type="PIRSF" id="PIRSF001491">
    <property type="entry name" value="Ppentomutase"/>
    <property type="match status" value="1"/>
</dbReference>
<dbReference type="SUPFAM" id="SSF53649">
    <property type="entry name" value="Alkaline phosphatase-like"/>
    <property type="match status" value="1"/>
</dbReference>
<dbReference type="SUPFAM" id="SSF143856">
    <property type="entry name" value="DeoB insert domain-like"/>
    <property type="match status" value="1"/>
</dbReference>
<feature type="chain" id="PRO_0000258296" description="Phosphopentomutase">
    <location>
        <begin position="1"/>
        <end position="392"/>
    </location>
</feature>
<feature type="binding site" evidence="1">
    <location>
        <position position="15"/>
    </location>
    <ligand>
        <name>Mn(2+)</name>
        <dbReference type="ChEBI" id="CHEBI:29035"/>
        <label>1</label>
    </ligand>
</feature>
<feature type="binding site" evidence="1">
    <location>
        <position position="287"/>
    </location>
    <ligand>
        <name>Mn(2+)</name>
        <dbReference type="ChEBI" id="CHEBI:29035"/>
        <label>2</label>
    </ligand>
</feature>
<feature type="binding site" evidence="1">
    <location>
        <position position="292"/>
    </location>
    <ligand>
        <name>Mn(2+)</name>
        <dbReference type="ChEBI" id="CHEBI:29035"/>
        <label>2</label>
    </ligand>
</feature>
<feature type="binding site" evidence="1">
    <location>
        <position position="328"/>
    </location>
    <ligand>
        <name>Mn(2+)</name>
        <dbReference type="ChEBI" id="CHEBI:29035"/>
        <label>1</label>
    </ligand>
</feature>
<feature type="binding site" evidence="1">
    <location>
        <position position="329"/>
    </location>
    <ligand>
        <name>Mn(2+)</name>
        <dbReference type="ChEBI" id="CHEBI:29035"/>
        <label>1</label>
    </ligand>
</feature>
<feature type="binding site" evidence="1">
    <location>
        <position position="340"/>
    </location>
    <ligand>
        <name>Mn(2+)</name>
        <dbReference type="ChEBI" id="CHEBI:29035"/>
        <label>2</label>
    </ligand>
</feature>
<keyword id="KW-0963">Cytoplasm</keyword>
<keyword id="KW-0413">Isomerase</keyword>
<keyword id="KW-0464">Manganese</keyword>
<keyword id="KW-0479">Metal-binding</keyword>
<keyword id="KW-1185">Reference proteome</keyword>
<sequence>MTLRKWQRVVLIVLDGVGVGGQPDASAYGDQGASTLPHVAERCGGLKLPTLEKLGLGRIVPIAGVDAVAEPSALYGRMLERSKGKDTTTGHWELAGLVQGEPFASYPKGFPDEIIDAFAGLAGVRPLGNIAASGTEILKQLGMEHLQTGRPIVYTSVDSVFQIAAHEEVMSCEALYALCEGMRKVLDRYRVGRVIARPFVGTSAENFERTSGRRDFAMPPQGDTLLNDMQNAGMTVLGVGKISDIFAGQGISRALKSTDNADGMRKTREALAQIERGLVFTNLVDFDMLYGHRLDALGFGRALEEFDAWLGGFLADFRDSDLLIITADHGCDPTTPGTDHTRESVPLLVWSPALVCGQDLGVRESFSDAAATIADLFDLEIRTGQSFMDRLL</sequence>
<evidence type="ECO:0000255" key="1">
    <source>
        <dbReference type="HAMAP-Rule" id="MF_00740"/>
    </source>
</evidence>
<name>DEOB_SYNC1</name>
<protein>
    <recommendedName>
        <fullName evidence="1">Phosphopentomutase</fullName>
        <ecNumber evidence="1">5.4.2.7</ecNumber>
    </recommendedName>
    <alternativeName>
        <fullName evidence="1">Phosphodeoxyribomutase</fullName>
    </alternativeName>
</protein>
<proteinExistence type="inferred from homology"/>